<name>OHK3_ORYSI</name>
<sequence>MDEMSCGGGGGGARWKRARVAGMGEGKAGGGGGAAFLGLERVGMVVRMLPVPEKVSARARVVRGSLVAHFRGWRVVRETWWWVLLLWILAGSLGSFYLFLFMNAQSLDKRRDSLASMCDERARMLQDQFNVSMNHLQALAILVSTFHHSKTPSAIDQMTFARYAERTAFERPLTSGVAYAVRVTHGEREQFERQQGWAIKKMYSSSNKKQSSPGPGPGDAAVAEIREPAEEYAPVIFAQDAYKHVISFDMLSGNEDRDNILRARKSGKGVLTAPFKLLNNRLGVILTYTVYKYELPAYARPHERIQAAIGYLGGIFDIQALVEKLLKQLASQESIMVNVYDTTNESPISMYGDDTGSGMCHVSVLNFGDPSRKHEMHCRFEKKPPWPWLAITSSFGTLVIALLTGHIFQATVHRIAKVEDDFHKMSELKKRAEDADVAKSQFLATVSHEIRTPMNGVLGMLQMLMDTDLDTTQQDYVRTAQASGKALVSLINEVLDQAKIESGKLELETVPFDLRTVCDDILSLFCGKAQEKGLELAVYVSDQVPQILIGDPGRIRQIITNLVGNSIKFTERGHIYLTVHVVEEVMSCLEVETGIQNTNTLSGYPVANRRRSWESIRLFNRELHSSEKSFAPIASDSISLVISVEDTGVGIPFEAQSRVFTPFMQVGPSIARIHGGTGIGLSISKCLVGLMKGEIGFASKPHVGSTFTFTAVLMRAHCKGNDIKSSEFKGINALVVDHRPVRAKVTKYHLQRLGVKTELTAELNQFISKLNSGSLTAKLVLIDKETWLKESHCTPLLVNKLRNNDKPDSPKLFLLGSSASSPKGGSDTSREHNLNVIMKPLRASMLQVSLRRALGGVDKVHCRNGVVGNSTLGSLLHKKQIIVVDDNIVNLKVAAGALKKYGAEVTCADSGKKAITLLKPPHNFDACFMDIQMPEMDGFEATRRIRVMERDLNERIERGEAPPECASIQRWRTPILAMTADVIQATHEECLKSEMDGYVSKPFEGEQLYSEVARFFQNHDQVE</sequence>
<proteinExistence type="evidence at transcript level"/>
<evidence type="ECO:0000250" key="1">
    <source>
        <dbReference type="UniProtKB" id="A1A698"/>
    </source>
</evidence>
<evidence type="ECO:0000255" key="2"/>
<evidence type="ECO:0000255" key="3">
    <source>
        <dbReference type="PROSITE-ProRule" id="PRU00049"/>
    </source>
</evidence>
<evidence type="ECO:0000255" key="4">
    <source>
        <dbReference type="PROSITE-ProRule" id="PRU00107"/>
    </source>
</evidence>
<evidence type="ECO:0000255" key="5">
    <source>
        <dbReference type="PROSITE-ProRule" id="PRU00169"/>
    </source>
</evidence>
<evidence type="ECO:0000256" key="6">
    <source>
        <dbReference type="SAM" id="MobiDB-lite"/>
    </source>
</evidence>
<evidence type="ECO:0000305" key="7"/>
<evidence type="ECO:0000312" key="8">
    <source>
        <dbReference type="EMBL" id="EAY77030.1"/>
    </source>
</evidence>
<feature type="chain" id="PRO_0000433808" description="Probable histidine kinase 3">
    <location>
        <begin position="1"/>
        <end position="1023"/>
    </location>
</feature>
<feature type="topological domain" description="Cytoplasmic" evidence="7">
    <location>
        <begin position="1"/>
        <end position="80"/>
    </location>
</feature>
<feature type="transmembrane region" description="Helical" evidence="2">
    <location>
        <begin position="81"/>
        <end position="101"/>
    </location>
</feature>
<feature type="topological domain" description="Extracellular" evidence="7">
    <location>
        <begin position="102"/>
        <end position="387"/>
    </location>
</feature>
<feature type="transmembrane region" description="Helical" evidence="2">
    <location>
        <begin position="388"/>
        <end position="408"/>
    </location>
</feature>
<feature type="topological domain" description="Cytoplasmic" evidence="7">
    <location>
        <begin position="409"/>
        <end position="1023"/>
    </location>
</feature>
<feature type="domain" description="CHASE" evidence="3">
    <location>
        <begin position="151"/>
        <end position="352"/>
    </location>
</feature>
<feature type="domain" description="Histidine kinase" evidence="4">
    <location>
        <begin position="445"/>
        <end position="715"/>
    </location>
</feature>
<feature type="domain" description="Response regulatory 1" evidence="5">
    <location>
        <begin position="732"/>
        <end position="854"/>
    </location>
</feature>
<feature type="domain" description="Response regulatory 2" evidence="5">
    <location>
        <begin position="880"/>
        <end position="1016"/>
    </location>
</feature>
<feature type="region of interest" description="Disordered" evidence="6">
    <location>
        <begin position="812"/>
        <end position="831"/>
    </location>
</feature>
<feature type="compositionally biased region" description="Polar residues" evidence="6">
    <location>
        <begin position="817"/>
        <end position="827"/>
    </location>
</feature>
<feature type="modified residue" description="Phosphohistidine; by autocatalysis" evidence="4">
    <location>
        <position position="448"/>
    </location>
</feature>
<feature type="modified residue" description="4-aspartylphosphate" evidence="5">
    <location>
        <position position="783"/>
    </location>
</feature>
<feature type="modified residue" description="4-aspartylphosphate" evidence="5">
    <location>
        <position position="930"/>
    </location>
</feature>
<feature type="sequence conflict" description="In Ref. 1; ABB76249." evidence="7" ref="1">
    <original>R</original>
    <variation>Q</variation>
    <location>
        <position position="188"/>
    </location>
</feature>
<feature type="sequence conflict" description="In Ref. 1; ABB76249." evidence="7" ref="1">
    <original>I</original>
    <variation>V</variation>
    <location>
        <position position="555"/>
    </location>
</feature>
<feature type="sequence conflict" description="In Ref. 1; ABB76249." evidence="7" ref="1">
    <original>V</original>
    <variation>I</variation>
    <location>
        <position position="563"/>
    </location>
</feature>
<dbReference type="EC" id="2.7.13.3" evidence="7"/>
<dbReference type="EMBL" id="DQ248962">
    <property type="protein sequence ID" value="ABB76249.1"/>
    <property type="molecule type" value="mRNA"/>
</dbReference>
<dbReference type="EMBL" id="CM000126">
    <property type="protein sequence ID" value="EAY77030.1"/>
    <property type="molecule type" value="Genomic_DNA"/>
</dbReference>
<dbReference type="SMR" id="A2WYI4"/>
<dbReference type="STRING" id="39946.A2WYI4"/>
<dbReference type="EnsemblPlants" id="BGIOSGA000228-TA">
    <property type="protein sequence ID" value="BGIOSGA000228-PA"/>
    <property type="gene ID" value="BGIOSGA000228"/>
</dbReference>
<dbReference type="Gramene" id="BGIOSGA000228-TA">
    <property type="protein sequence ID" value="BGIOSGA000228-PA"/>
    <property type="gene ID" value="BGIOSGA000228"/>
</dbReference>
<dbReference type="HOGENOM" id="CLU_000445_16_2_1"/>
<dbReference type="OMA" id="ACKQSIM"/>
<dbReference type="OrthoDB" id="125004at2759"/>
<dbReference type="Proteomes" id="UP000007015">
    <property type="component" value="Chromosome 1"/>
</dbReference>
<dbReference type="GO" id="GO:0005634">
    <property type="term" value="C:nucleus"/>
    <property type="evidence" value="ECO:0007669"/>
    <property type="project" value="TreeGrafter"/>
</dbReference>
<dbReference type="GO" id="GO:0005886">
    <property type="term" value="C:plasma membrane"/>
    <property type="evidence" value="ECO:0007669"/>
    <property type="project" value="UniProtKB-SubCell"/>
</dbReference>
<dbReference type="GO" id="GO:0000155">
    <property type="term" value="F:phosphorelay sensor kinase activity"/>
    <property type="evidence" value="ECO:0007669"/>
    <property type="project" value="InterPro"/>
</dbReference>
<dbReference type="GO" id="GO:0043424">
    <property type="term" value="F:protein histidine kinase binding"/>
    <property type="evidence" value="ECO:0007669"/>
    <property type="project" value="EnsemblPlants"/>
</dbReference>
<dbReference type="GO" id="GO:0071215">
    <property type="term" value="P:cellular response to abscisic acid stimulus"/>
    <property type="evidence" value="ECO:0007669"/>
    <property type="project" value="EnsemblPlants"/>
</dbReference>
<dbReference type="GO" id="GO:0070417">
    <property type="term" value="P:cellular response to cold"/>
    <property type="evidence" value="ECO:0007669"/>
    <property type="project" value="EnsemblPlants"/>
</dbReference>
<dbReference type="GO" id="GO:0016036">
    <property type="term" value="P:cellular response to phosphate starvation"/>
    <property type="evidence" value="ECO:0007669"/>
    <property type="project" value="EnsemblPlants"/>
</dbReference>
<dbReference type="GO" id="GO:0071329">
    <property type="term" value="P:cellular response to sucrose stimulus"/>
    <property type="evidence" value="ECO:0007669"/>
    <property type="project" value="EnsemblPlants"/>
</dbReference>
<dbReference type="GO" id="GO:0009736">
    <property type="term" value="P:cytokinin-activated signaling pathway"/>
    <property type="evidence" value="ECO:0007669"/>
    <property type="project" value="UniProtKB-KW"/>
</dbReference>
<dbReference type="GO" id="GO:0042742">
    <property type="term" value="P:defense response to bacterium"/>
    <property type="evidence" value="ECO:0007669"/>
    <property type="project" value="EnsemblPlants"/>
</dbReference>
<dbReference type="GO" id="GO:0010150">
    <property type="term" value="P:leaf senescence"/>
    <property type="evidence" value="ECO:0007669"/>
    <property type="project" value="EnsemblPlants"/>
</dbReference>
<dbReference type="GO" id="GO:0034757">
    <property type="term" value="P:negative regulation of iron ion transport"/>
    <property type="evidence" value="ECO:0007669"/>
    <property type="project" value="EnsemblPlants"/>
</dbReference>
<dbReference type="GO" id="GO:0010087">
    <property type="term" value="P:phloem or xylem histogenesis"/>
    <property type="evidence" value="ECO:0007669"/>
    <property type="project" value="EnsemblPlants"/>
</dbReference>
<dbReference type="GO" id="GO:0010271">
    <property type="term" value="P:regulation of chlorophyll catabolic process"/>
    <property type="evidence" value="ECO:0007669"/>
    <property type="project" value="EnsemblPlants"/>
</dbReference>
<dbReference type="GO" id="GO:0009909">
    <property type="term" value="P:regulation of flower development"/>
    <property type="evidence" value="ECO:0007669"/>
    <property type="project" value="EnsemblPlants"/>
</dbReference>
<dbReference type="GO" id="GO:0048509">
    <property type="term" value="P:regulation of meristem development"/>
    <property type="evidence" value="ECO:0007669"/>
    <property type="project" value="EnsemblPlants"/>
</dbReference>
<dbReference type="GO" id="GO:0010029">
    <property type="term" value="P:regulation of seed germination"/>
    <property type="evidence" value="ECO:0007669"/>
    <property type="project" value="EnsemblPlants"/>
</dbReference>
<dbReference type="GO" id="GO:0009651">
    <property type="term" value="P:response to salt stress"/>
    <property type="evidence" value="ECO:0007669"/>
    <property type="project" value="EnsemblPlants"/>
</dbReference>
<dbReference type="GO" id="GO:0009414">
    <property type="term" value="P:response to water deprivation"/>
    <property type="evidence" value="ECO:0007669"/>
    <property type="project" value="EnsemblPlants"/>
</dbReference>
<dbReference type="GO" id="GO:0080117">
    <property type="term" value="P:secondary growth"/>
    <property type="evidence" value="ECO:0007669"/>
    <property type="project" value="EnsemblPlants"/>
</dbReference>
<dbReference type="CDD" id="cd16922">
    <property type="entry name" value="HATPase_EvgS-ArcB-TorS-like"/>
    <property type="match status" value="1"/>
</dbReference>
<dbReference type="CDD" id="cd00082">
    <property type="entry name" value="HisKA"/>
    <property type="match status" value="1"/>
</dbReference>
<dbReference type="CDD" id="cd17546">
    <property type="entry name" value="REC_hyHK_CKI1_RcsC-like"/>
    <property type="match status" value="1"/>
</dbReference>
<dbReference type="FunFam" id="3.40.50.2300:FF:000137">
    <property type="entry name" value="Histidine kinase 3"/>
    <property type="match status" value="1"/>
</dbReference>
<dbReference type="FunFam" id="1.10.287.130:FF:000015">
    <property type="entry name" value="Histidine kinase 4"/>
    <property type="match status" value="1"/>
</dbReference>
<dbReference type="FunFam" id="3.30.450.350:FF:000001">
    <property type="entry name" value="Histidine kinase 4"/>
    <property type="match status" value="1"/>
</dbReference>
<dbReference type="Gene3D" id="1.10.287.130">
    <property type="match status" value="1"/>
</dbReference>
<dbReference type="Gene3D" id="3.40.50.2300">
    <property type="match status" value="1"/>
</dbReference>
<dbReference type="Gene3D" id="6.10.250.1190">
    <property type="match status" value="1"/>
</dbReference>
<dbReference type="Gene3D" id="3.30.450.350">
    <property type="entry name" value="CHASE domain"/>
    <property type="match status" value="1"/>
</dbReference>
<dbReference type="Gene3D" id="3.30.565.10">
    <property type="entry name" value="Histidine kinase-like ATPase, C-terminal domain"/>
    <property type="match status" value="1"/>
</dbReference>
<dbReference type="InterPro" id="IPR050956">
    <property type="entry name" value="2C_system_His_kinase"/>
</dbReference>
<dbReference type="InterPro" id="IPR006189">
    <property type="entry name" value="CHASE_dom"/>
</dbReference>
<dbReference type="InterPro" id="IPR042240">
    <property type="entry name" value="CHASE_sf"/>
</dbReference>
<dbReference type="InterPro" id="IPR011006">
    <property type="entry name" value="CheY-like_superfamily"/>
</dbReference>
<dbReference type="InterPro" id="IPR036890">
    <property type="entry name" value="HATPase_C_sf"/>
</dbReference>
<dbReference type="InterPro" id="IPR005467">
    <property type="entry name" value="His_kinase_dom"/>
</dbReference>
<dbReference type="InterPro" id="IPR003661">
    <property type="entry name" value="HisK_dim/P_dom"/>
</dbReference>
<dbReference type="InterPro" id="IPR036097">
    <property type="entry name" value="HisK_dim/P_sf"/>
</dbReference>
<dbReference type="InterPro" id="IPR056839">
    <property type="entry name" value="Receiver_AHK4/CRE1_1st"/>
</dbReference>
<dbReference type="InterPro" id="IPR004358">
    <property type="entry name" value="Sig_transdc_His_kin-like_C"/>
</dbReference>
<dbReference type="InterPro" id="IPR001789">
    <property type="entry name" value="Sig_transdc_resp-reg_receiver"/>
</dbReference>
<dbReference type="PANTHER" id="PTHR43719:SF73">
    <property type="entry name" value="HISTIDINE KINASE 3"/>
    <property type="match status" value="1"/>
</dbReference>
<dbReference type="PANTHER" id="PTHR43719">
    <property type="entry name" value="TWO-COMPONENT HISTIDINE KINASE"/>
    <property type="match status" value="1"/>
</dbReference>
<dbReference type="Pfam" id="PF03924">
    <property type="entry name" value="CHASE"/>
    <property type="match status" value="1"/>
</dbReference>
<dbReference type="Pfam" id="PF02518">
    <property type="entry name" value="HATPase_c"/>
    <property type="match status" value="1"/>
</dbReference>
<dbReference type="Pfam" id="PF00512">
    <property type="entry name" value="HisKA"/>
    <property type="match status" value="1"/>
</dbReference>
<dbReference type="Pfam" id="PF24896">
    <property type="entry name" value="Receiver_CRE1"/>
    <property type="match status" value="1"/>
</dbReference>
<dbReference type="Pfam" id="PF00072">
    <property type="entry name" value="Response_reg"/>
    <property type="match status" value="1"/>
</dbReference>
<dbReference type="PRINTS" id="PR00344">
    <property type="entry name" value="BCTRLSENSOR"/>
</dbReference>
<dbReference type="SMART" id="SM01079">
    <property type="entry name" value="CHASE"/>
    <property type="match status" value="1"/>
</dbReference>
<dbReference type="SMART" id="SM00387">
    <property type="entry name" value="HATPase_c"/>
    <property type="match status" value="1"/>
</dbReference>
<dbReference type="SMART" id="SM00388">
    <property type="entry name" value="HisKA"/>
    <property type="match status" value="1"/>
</dbReference>
<dbReference type="SMART" id="SM00448">
    <property type="entry name" value="REC"/>
    <property type="match status" value="1"/>
</dbReference>
<dbReference type="SUPFAM" id="SSF55874">
    <property type="entry name" value="ATPase domain of HSP90 chaperone/DNA topoisomerase II/histidine kinase"/>
    <property type="match status" value="1"/>
</dbReference>
<dbReference type="SUPFAM" id="SSF52172">
    <property type="entry name" value="CheY-like"/>
    <property type="match status" value="2"/>
</dbReference>
<dbReference type="SUPFAM" id="SSF47384">
    <property type="entry name" value="Homodimeric domain of signal transducing histidine kinase"/>
    <property type="match status" value="1"/>
</dbReference>
<dbReference type="PROSITE" id="PS50839">
    <property type="entry name" value="CHASE"/>
    <property type="match status" value="1"/>
</dbReference>
<dbReference type="PROSITE" id="PS50109">
    <property type="entry name" value="HIS_KIN"/>
    <property type="match status" value="1"/>
</dbReference>
<dbReference type="PROSITE" id="PS50110">
    <property type="entry name" value="RESPONSE_REGULATORY"/>
    <property type="match status" value="2"/>
</dbReference>
<gene>
    <name evidence="7" type="primary">HK3</name>
    <name type="synonym">OHK2</name>
    <name evidence="8" type="ORF">OsI_04985</name>
</gene>
<accession>A2WYI4</accession>
<accession>Q2Q1D4</accession>
<protein>
    <recommendedName>
        <fullName evidence="7">Probable histidine kinase 3</fullName>
        <shortName evidence="7">OsHK3</shortName>
        <ecNumber evidence="7">2.7.13.3</ecNumber>
    </recommendedName>
</protein>
<reference key="1">
    <citation type="submission" date="2005-10" db="EMBL/GenBank/DDBJ databases">
        <title>A hybrid type histidine kinase OsHK is inducible by multiple stresses in Oryza sativa L. cv. IR64.</title>
        <authorList>
            <person name="Kumar M."/>
            <person name="Bansal A."/>
            <person name="Singla-Pareek S.L."/>
            <person name="Sopory S.K."/>
            <person name="Pareek A."/>
        </authorList>
    </citation>
    <scope>NUCLEOTIDE SEQUENCE [MRNA]</scope>
    <source>
        <strain>cv. IR64</strain>
    </source>
</reference>
<reference key="2">
    <citation type="journal article" date="2005" name="PLoS Biol.">
        <title>The genomes of Oryza sativa: a history of duplications.</title>
        <authorList>
            <person name="Yu J."/>
            <person name="Wang J."/>
            <person name="Lin W."/>
            <person name="Li S."/>
            <person name="Li H."/>
            <person name="Zhou J."/>
            <person name="Ni P."/>
            <person name="Dong W."/>
            <person name="Hu S."/>
            <person name="Zeng C."/>
            <person name="Zhang J."/>
            <person name="Zhang Y."/>
            <person name="Li R."/>
            <person name="Xu Z."/>
            <person name="Li S."/>
            <person name="Li X."/>
            <person name="Zheng H."/>
            <person name="Cong L."/>
            <person name="Lin L."/>
            <person name="Yin J."/>
            <person name="Geng J."/>
            <person name="Li G."/>
            <person name="Shi J."/>
            <person name="Liu J."/>
            <person name="Lv H."/>
            <person name="Li J."/>
            <person name="Wang J."/>
            <person name="Deng Y."/>
            <person name="Ran L."/>
            <person name="Shi X."/>
            <person name="Wang X."/>
            <person name="Wu Q."/>
            <person name="Li C."/>
            <person name="Ren X."/>
            <person name="Wang J."/>
            <person name="Wang X."/>
            <person name="Li D."/>
            <person name="Liu D."/>
            <person name="Zhang X."/>
            <person name="Ji Z."/>
            <person name="Zhao W."/>
            <person name="Sun Y."/>
            <person name="Zhang Z."/>
            <person name="Bao J."/>
            <person name="Han Y."/>
            <person name="Dong L."/>
            <person name="Ji J."/>
            <person name="Chen P."/>
            <person name="Wu S."/>
            <person name="Liu J."/>
            <person name="Xiao Y."/>
            <person name="Bu D."/>
            <person name="Tan J."/>
            <person name="Yang L."/>
            <person name="Ye C."/>
            <person name="Zhang J."/>
            <person name="Xu J."/>
            <person name="Zhou Y."/>
            <person name="Yu Y."/>
            <person name="Zhang B."/>
            <person name="Zhuang S."/>
            <person name="Wei H."/>
            <person name="Liu B."/>
            <person name="Lei M."/>
            <person name="Yu H."/>
            <person name="Li Y."/>
            <person name="Xu H."/>
            <person name="Wei S."/>
            <person name="He X."/>
            <person name="Fang L."/>
            <person name="Zhang Z."/>
            <person name="Zhang Y."/>
            <person name="Huang X."/>
            <person name="Su Z."/>
            <person name="Tong W."/>
            <person name="Li J."/>
            <person name="Tong Z."/>
            <person name="Li S."/>
            <person name="Ye J."/>
            <person name="Wang L."/>
            <person name="Fang L."/>
            <person name="Lei T."/>
            <person name="Chen C.-S."/>
            <person name="Chen H.-C."/>
            <person name="Xu Z."/>
            <person name="Li H."/>
            <person name="Huang H."/>
            <person name="Zhang F."/>
            <person name="Xu H."/>
            <person name="Li N."/>
            <person name="Zhao C."/>
            <person name="Li S."/>
            <person name="Dong L."/>
            <person name="Huang Y."/>
            <person name="Li L."/>
            <person name="Xi Y."/>
            <person name="Qi Q."/>
            <person name="Li W."/>
            <person name="Zhang B."/>
            <person name="Hu W."/>
            <person name="Zhang Y."/>
            <person name="Tian X."/>
            <person name="Jiao Y."/>
            <person name="Liang X."/>
            <person name="Jin J."/>
            <person name="Gao L."/>
            <person name="Zheng W."/>
            <person name="Hao B."/>
            <person name="Liu S.-M."/>
            <person name="Wang W."/>
            <person name="Yuan L."/>
            <person name="Cao M."/>
            <person name="McDermott J."/>
            <person name="Samudrala R."/>
            <person name="Wang J."/>
            <person name="Wong G.K.-S."/>
            <person name="Yang H."/>
        </authorList>
    </citation>
    <scope>NUCLEOTIDE SEQUENCE [LARGE SCALE GENOMIC DNA]</scope>
    <source>
        <strain>cv. 93-11</strain>
    </source>
</reference>
<organism>
    <name type="scientific">Oryza sativa subsp. indica</name>
    <name type="common">Rice</name>
    <dbReference type="NCBI Taxonomy" id="39946"/>
    <lineage>
        <taxon>Eukaryota</taxon>
        <taxon>Viridiplantae</taxon>
        <taxon>Streptophyta</taxon>
        <taxon>Embryophyta</taxon>
        <taxon>Tracheophyta</taxon>
        <taxon>Spermatophyta</taxon>
        <taxon>Magnoliopsida</taxon>
        <taxon>Liliopsida</taxon>
        <taxon>Poales</taxon>
        <taxon>Poaceae</taxon>
        <taxon>BOP clade</taxon>
        <taxon>Oryzoideae</taxon>
        <taxon>Oryzeae</taxon>
        <taxon>Oryzinae</taxon>
        <taxon>Oryza</taxon>
        <taxon>Oryza sativa</taxon>
    </lineage>
</organism>
<keyword id="KW-1003">Cell membrane</keyword>
<keyword id="KW-0932">Cytokinin signaling pathway</keyword>
<keyword id="KW-0418">Kinase</keyword>
<keyword id="KW-0472">Membrane</keyword>
<keyword id="KW-0597">Phosphoprotein</keyword>
<keyword id="KW-1185">Reference proteome</keyword>
<keyword id="KW-0677">Repeat</keyword>
<keyword id="KW-0808">Transferase</keyword>
<keyword id="KW-0812">Transmembrane</keyword>
<keyword id="KW-1133">Transmembrane helix</keyword>
<keyword id="KW-0902">Two-component regulatory system</keyword>
<comment type="function">
    <text evidence="1">Cytokinin receptor related to bacterial two-component regulators. Functions as a histidine kinase and transmits the stress signal to a downstream MAPK cascade.</text>
</comment>
<comment type="catalytic activity">
    <reaction evidence="7">
        <text>ATP + protein L-histidine = ADP + protein N-phospho-L-histidine.</text>
        <dbReference type="EC" id="2.7.13.3"/>
    </reaction>
</comment>
<comment type="subcellular location">
    <subcellularLocation>
        <location evidence="7">Cell membrane</location>
        <topology evidence="2">Multi-pass membrane protein</topology>
    </subcellularLocation>
</comment>
<comment type="domain">
    <text evidence="7">Histidine-containing phosphotransfer domain (HPt) contains an active histidine that mediates the phosphotransfer.</text>
</comment>
<comment type="PTM">
    <text evidence="7">Activation probably requires a transfer of a phosphate group between a His in the transmitter domain and an Asp of the receiver domain.</text>
</comment>